<sequence>MSYENLANLIFPNIDKTPEYYFEKYPKRDLKEGAKVLRYAPSPTGFQHIGGVFASLINERLAHQSGGIFYLRIEDTDQKREVEGAIDDTIKTMHNFGMDFDEGITGENSEKGAYAPYKQSQRADIYRAFVKDLLRKGLAYPCFMTSEELEALREKQIAEKLTPGCYGEFAKYRDLSPEEAIKRIEAGENYVIRMKSPGNPEKRVVAHDMIKGEVSFPENLQDVVIIKGDGLPTYHFAHAIDDTLMRTTHVIRGEEWLSSLPIHLQMFEVLGVEAPKYAHIPTIMKMDGSSKRKLSKRKDPESAVSYYSEKGYPSQSVIEYLLNIINSAFEEWRAENPDADYHDYKVELDKMSKSGALFDLVKLNDVSKDVICKMKPEVVYDLYTNWAKEYDKEMYDLVTSKEAMMKEVFNIDKEGPKPRKDFAKWDEVREKIFYFFDELFDKETANDVELPKTLELEEAKRIIEAYEKAYNFNTDKDTWFSDLKEVAVELGYATDRKKYKKNPEEYKGMVSDVAGAVRAALTHRANTPDLYTIMQIMGEEAVRERFKKFLAL</sequence>
<gene>
    <name evidence="1" type="primary">gltX</name>
    <name type="ordered locus">CPR_1067</name>
</gene>
<accession>Q0SU18</accession>
<organism>
    <name type="scientific">Clostridium perfringens (strain SM101 / Type A)</name>
    <dbReference type="NCBI Taxonomy" id="289380"/>
    <lineage>
        <taxon>Bacteria</taxon>
        <taxon>Bacillati</taxon>
        <taxon>Bacillota</taxon>
        <taxon>Clostridia</taxon>
        <taxon>Eubacteriales</taxon>
        <taxon>Clostridiaceae</taxon>
        <taxon>Clostridium</taxon>
    </lineage>
</organism>
<reference key="1">
    <citation type="journal article" date="2006" name="Genome Res.">
        <title>Skewed genomic variability in strains of the toxigenic bacterial pathogen, Clostridium perfringens.</title>
        <authorList>
            <person name="Myers G.S.A."/>
            <person name="Rasko D.A."/>
            <person name="Cheung J.K."/>
            <person name="Ravel J."/>
            <person name="Seshadri R."/>
            <person name="DeBoy R.T."/>
            <person name="Ren Q."/>
            <person name="Varga J."/>
            <person name="Awad M.M."/>
            <person name="Brinkac L.M."/>
            <person name="Daugherty S.C."/>
            <person name="Haft D.H."/>
            <person name="Dodson R.J."/>
            <person name="Madupu R."/>
            <person name="Nelson W.C."/>
            <person name="Rosovitz M.J."/>
            <person name="Sullivan S.A."/>
            <person name="Khouri H."/>
            <person name="Dimitrov G.I."/>
            <person name="Watkins K.L."/>
            <person name="Mulligan S."/>
            <person name="Benton J."/>
            <person name="Radune D."/>
            <person name="Fisher D.J."/>
            <person name="Atkins H.S."/>
            <person name="Hiscox T."/>
            <person name="Jost B.H."/>
            <person name="Billington S.J."/>
            <person name="Songer J.G."/>
            <person name="McClane B.A."/>
            <person name="Titball R.W."/>
            <person name="Rood J.I."/>
            <person name="Melville S.B."/>
            <person name="Paulsen I.T."/>
        </authorList>
    </citation>
    <scope>NUCLEOTIDE SEQUENCE [LARGE SCALE GENOMIC DNA]</scope>
    <source>
        <strain>SM101 / Type A</strain>
    </source>
</reference>
<proteinExistence type="inferred from homology"/>
<feature type="chain" id="PRO_0000367651" description="Glutamate--tRNA ligase">
    <location>
        <begin position="1"/>
        <end position="552"/>
    </location>
</feature>
<feature type="short sequence motif" description="'HIGH' region" evidence="1">
    <location>
        <begin position="41"/>
        <end position="51"/>
    </location>
</feature>
<feature type="short sequence motif" description="'KMSKS' region" evidence="1">
    <location>
        <begin position="293"/>
        <end position="297"/>
    </location>
</feature>
<feature type="binding site" evidence="1">
    <location>
        <position position="296"/>
    </location>
    <ligand>
        <name>ATP</name>
        <dbReference type="ChEBI" id="CHEBI:30616"/>
    </ligand>
</feature>
<protein>
    <recommendedName>
        <fullName evidence="1">Glutamate--tRNA ligase</fullName>
        <ecNumber evidence="1">6.1.1.17</ecNumber>
    </recommendedName>
    <alternativeName>
        <fullName evidence="1">Glutamyl-tRNA synthetase</fullName>
        <shortName evidence="1">GluRS</shortName>
    </alternativeName>
</protein>
<dbReference type="EC" id="6.1.1.17" evidence="1"/>
<dbReference type="EMBL" id="CP000312">
    <property type="protein sequence ID" value="ABG86873.1"/>
    <property type="molecule type" value="Genomic_DNA"/>
</dbReference>
<dbReference type="RefSeq" id="WP_011592093.1">
    <property type="nucleotide sequence ID" value="NC_008262.1"/>
</dbReference>
<dbReference type="SMR" id="Q0SU18"/>
<dbReference type="KEGG" id="cpr:CPR_1067"/>
<dbReference type="Proteomes" id="UP000001824">
    <property type="component" value="Chromosome"/>
</dbReference>
<dbReference type="GO" id="GO:0005829">
    <property type="term" value="C:cytosol"/>
    <property type="evidence" value="ECO:0007669"/>
    <property type="project" value="TreeGrafter"/>
</dbReference>
<dbReference type="GO" id="GO:0005524">
    <property type="term" value="F:ATP binding"/>
    <property type="evidence" value="ECO:0007669"/>
    <property type="project" value="UniProtKB-UniRule"/>
</dbReference>
<dbReference type="GO" id="GO:0004818">
    <property type="term" value="F:glutamate-tRNA ligase activity"/>
    <property type="evidence" value="ECO:0007669"/>
    <property type="project" value="UniProtKB-UniRule"/>
</dbReference>
<dbReference type="GO" id="GO:0000049">
    <property type="term" value="F:tRNA binding"/>
    <property type="evidence" value="ECO:0007669"/>
    <property type="project" value="InterPro"/>
</dbReference>
<dbReference type="GO" id="GO:0008270">
    <property type="term" value="F:zinc ion binding"/>
    <property type="evidence" value="ECO:0007669"/>
    <property type="project" value="InterPro"/>
</dbReference>
<dbReference type="GO" id="GO:0006424">
    <property type="term" value="P:glutamyl-tRNA aminoacylation"/>
    <property type="evidence" value="ECO:0007669"/>
    <property type="project" value="UniProtKB-UniRule"/>
</dbReference>
<dbReference type="CDD" id="cd00808">
    <property type="entry name" value="GluRS_core"/>
    <property type="match status" value="1"/>
</dbReference>
<dbReference type="Gene3D" id="1.10.10.350">
    <property type="match status" value="1"/>
</dbReference>
<dbReference type="Gene3D" id="3.40.50.620">
    <property type="entry name" value="HUPs"/>
    <property type="match status" value="1"/>
</dbReference>
<dbReference type="HAMAP" id="MF_00022">
    <property type="entry name" value="Glu_tRNA_synth_type1"/>
    <property type="match status" value="1"/>
</dbReference>
<dbReference type="InterPro" id="IPR045462">
    <property type="entry name" value="aa-tRNA-synth_I_cd-bd"/>
</dbReference>
<dbReference type="InterPro" id="IPR020751">
    <property type="entry name" value="aa-tRNA-synth_I_codon-bd_sub2"/>
</dbReference>
<dbReference type="InterPro" id="IPR008925">
    <property type="entry name" value="aa_tRNA-synth_I_cd-bd_sf"/>
</dbReference>
<dbReference type="InterPro" id="IPR004527">
    <property type="entry name" value="Glu-tRNA-ligase_bac/mito"/>
</dbReference>
<dbReference type="InterPro" id="IPR000924">
    <property type="entry name" value="Glu/Gln-tRNA-synth"/>
</dbReference>
<dbReference type="InterPro" id="IPR020058">
    <property type="entry name" value="Glu/Gln-tRNA-synth_Ib_cat-dom"/>
</dbReference>
<dbReference type="InterPro" id="IPR049940">
    <property type="entry name" value="GluQ/Sye"/>
</dbReference>
<dbReference type="InterPro" id="IPR033910">
    <property type="entry name" value="GluRS_core"/>
</dbReference>
<dbReference type="InterPro" id="IPR014729">
    <property type="entry name" value="Rossmann-like_a/b/a_fold"/>
</dbReference>
<dbReference type="NCBIfam" id="TIGR00464">
    <property type="entry name" value="gltX_bact"/>
    <property type="match status" value="1"/>
</dbReference>
<dbReference type="PANTHER" id="PTHR43311">
    <property type="entry name" value="GLUTAMATE--TRNA LIGASE"/>
    <property type="match status" value="1"/>
</dbReference>
<dbReference type="PANTHER" id="PTHR43311:SF2">
    <property type="entry name" value="GLUTAMATE--TRNA LIGASE, MITOCHONDRIAL-RELATED"/>
    <property type="match status" value="1"/>
</dbReference>
<dbReference type="Pfam" id="PF19269">
    <property type="entry name" value="Anticodon_2"/>
    <property type="match status" value="1"/>
</dbReference>
<dbReference type="Pfam" id="PF00749">
    <property type="entry name" value="tRNA-synt_1c"/>
    <property type="match status" value="1"/>
</dbReference>
<dbReference type="PRINTS" id="PR00987">
    <property type="entry name" value="TRNASYNTHGLU"/>
</dbReference>
<dbReference type="SUPFAM" id="SSF48163">
    <property type="entry name" value="An anticodon-binding domain of class I aminoacyl-tRNA synthetases"/>
    <property type="match status" value="1"/>
</dbReference>
<dbReference type="SUPFAM" id="SSF52374">
    <property type="entry name" value="Nucleotidylyl transferase"/>
    <property type="match status" value="1"/>
</dbReference>
<evidence type="ECO:0000255" key="1">
    <source>
        <dbReference type="HAMAP-Rule" id="MF_00022"/>
    </source>
</evidence>
<name>SYE_CLOPS</name>
<keyword id="KW-0030">Aminoacyl-tRNA synthetase</keyword>
<keyword id="KW-0067">ATP-binding</keyword>
<keyword id="KW-0963">Cytoplasm</keyword>
<keyword id="KW-0436">Ligase</keyword>
<keyword id="KW-0547">Nucleotide-binding</keyword>
<keyword id="KW-0648">Protein biosynthesis</keyword>
<comment type="function">
    <text evidence="1">Catalyzes the attachment of glutamate to tRNA(Glu) in a two-step reaction: glutamate is first activated by ATP to form Glu-AMP and then transferred to the acceptor end of tRNA(Glu).</text>
</comment>
<comment type="catalytic activity">
    <reaction evidence="1">
        <text>tRNA(Glu) + L-glutamate + ATP = L-glutamyl-tRNA(Glu) + AMP + diphosphate</text>
        <dbReference type="Rhea" id="RHEA:23540"/>
        <dbReference type="Rhea" id="RHEA-COMP:9663"/>
        <dbReference type="Rhea" id="RHEA-COMP:9680"/>
        <dbReference type="ChEBI" id="CHEBI:29985"/>
        <dbReference type="ChEBI" id="CHEBI:30616"/>
        <dbReference type="ChEBI" id="CHEBI:33019"/>
        <dbReference type="ChEBI" id="CHEBI:78442"/>
        <dbReference type="ChEBI" id="CHEBI:78520"/>
        <dbReference type="ChEBI" id="CHEBI:456215"/>
        <dbReference type="EC" id="6.1.1.17"/>
    </reaction>
</comment>
<comment type="subunit">
    <text evidence="1">Monomer.</text>
</comment>
<comment type="subcellular location">
    <subcellularLocation>
        <location evidence="1">Cytoplasm</location>
    </subcellularLocation>
</comment>
<comment type="similarity">
    <text evidence="1">Belongs to the class-I aminoacyl-tRNA synthetase family. Glutamate--tRNA ligase type 1 subfamily.</text>
</comment>